<feature type="chain" id="PRO_0000229994" description="Gamma-glutamyl phosphate reductase">
    <location>
        <begin position="1"/>
        <end position="423"/>
    </location>
</feature>
<sequence length="423" mass="45106">MDIDQYMTDVGRRARRASREIARASTAAKNAALEAVARAIGRDADALKAANARDVARAKDKGHDAAFVDRLTLSDKALKTMIEGLRQVATLADPIGEMSNLKYRPSGIQVGQMRVPLGVIGIIYESRPNVTIDAAALCLKSGNATILRGGSEALESNTALAKLIGEGLAAAGLSQDAVQVVGTADRAAVGKLITMTEYVDVIVPRGGKSLIERLINEARVPMIKHLDGICHVYVDDRASVAKALAVCDNAKTHRYGTCNTMETLLVARGIAPAVLTPLGRLYREKGVELRVDADARAVLEAAGVGPLVDATDEDWRTEYLAPVLAIKIVDGIDAAIEHINEYGSHHTDAIVTEDHDRAMRFLREVDSASVMVNASTRFADGFEFGLGAEIGISNDKLHARGPVGLEGLTSLKYVVLGHGEGRE</sequence>
<evidence type="ECO:0000255" key="1">
    <source>
        <dbReference type="HAMAP-Rule" id="MF_00412"/>
    </source>
</evidence>
<accession>Q3JNN5</accession>
<organism>
    <name type="scientific">Burkholderia pseudomallei (strain 1710b)</name>
    <dbReference type="NCBI Taxonomy" id="320372"/>
    <lineage>
        <taxon>Bacteria</taxon>
        <taxon>Pseudomonadati</taxon>
        <taxon>Pseudomonadota</taxon>
        <taxon>Betaproteobacteria</taxon>
        <taxon>Burkholderiales</taxon>
        <taxon>Burkholderiaceae</taxon>
        <taxon>Burkholderia</taxon>
        <taxon>pseudomallei group</taxon>
    </lineage>
</organism>
<comment type="function">
    <text evidence="1">Catalyzes the NADPH-dependent reduction of L-glutamate 5-phosphate into L-glutamate 5-semialdehyde and phosphate. The product spontaneously undergoes cyclization to form 1-pyrroline-5-carboxylate.</text>
</comment>
<comment type="catalytic activity">
    <reaction evidence="1">
        <text>L-glutamate 5-semialdehyde + phosphate + NADP(+) = L-glutamyl 5-phosphate + NADPH + H(+)</text>
        <dbReference type="Rhea" id="RHEA:19541"/>
        <dbReference type="ChEBI" id="CHEBI:15378"/>
        <dbReference type="ChEBI" id="CHEBI:43474"/>
        <dbReference type="ChEBI" id="CHEBI:57783"/>
        <dbReference type="ChEBI" id="CHEBI:58066"/>
        <dbReference type="ChEBI" id="CHEBI:58274"/>
        <dbReference type="ChEBI" id="CHEBI:58349"/>
        <dbReference type="EC" id="1.2.1.41"/>
    </reaction>
</comment>
<comment type="pathway">
    <text evidence="1">Amino-acid biosynthesis; L-proline biosynthesis; L-glutamate 5-semialdehyde from L-glutamate: step 2/2.</text>
</comment>
<comment type="subcellular location">
    <subcellularLocation>
        <location evidence="1">Cytoplasm</location>
    </subcellularLocation>
</comment>
<comment type="similarity">
    <text evidence="1">Belongs to the gamma-glutamyl phosphate reductase family.</text>
</comment>
<protein>
    <recommendedName>
        <fullName evidence="1">Gamma-glutamyl phosphate reductase</fullName>
        <shortName evidence="1">GPR</shortName>
        <ecNumber evidence="1">1.2.1.41</ecNumber>
    </recommendedName>
    <alternativeName>
        <fullName evidence="1">Glutamate-5-semialdehyde dehydrogenase</fullName>
    </alternativeName>
    <alternativeName>
        <fullName evidence="1">Glutamyl-gamma-semialdehyde dehydrogenase</fullName>
        <shortName evidence="1">GSA dehydrogenase</shortName>
    </alternativeName>
</protein>
<keyword id="KW-0028">Amino-acid biosynthesis</keyword>
<keyword id="KW-0963">Cytoplasm</keyword>
<keyword id="KW-0521">NADP</keyword>
<keyword id="KW-0560">Oxidoreductase</keyword>
<keyword id="KW-0641">Proline biosynthesis</keyword>
<reference key="1">
    <citation type="journal article" date="2010" name="Genome Biol. Evol.">
        <title>Continuing evolution of Burkholderia mallei through genome reduction and large-scale rearrangements.</title>
        <authorList>
            <person name="Losada L."/>
            <person name="Ronning C.M."/>
            <person name="DeShazer D."/>
            <person name="Woods D."/>
            <person name="Fedorova N."/>
            <person name="Kim H.S."/>
            <person name="Shabalina S.A."/>
            <person name="Pearson T.R."/>
            <person name="Brinkac L."/>
            <person name="Tan P."/>
            <person name="Nandi T."/>
            <person name="Crabtree J."/>
            <person name="Badger J."/>
            <person name="Beckstrom-Sternberg S."/>
            <person name="Saqib M."/>
            <person name="Schutzer S.E."/>
            <person name="Keim P."/>
            <person name="Nierman W.C."/>
        </authorList>
    </citation>
    <scope>NUCLEOTIDE SEQUENCE [LARGE SCALE GENOMIC DNA]</scope>
    <source>
        <strain>1710b</strain>
    </source>
</reference>
<name>PROA_BURP1</name>
<dbReference type="EC" id="1.2.1.41" evidence="1"/>
<dbReference type="EMBL" id="CP000124">
    <property type="protein sequence ID" value="ABA48649.1"/>
    <property type="molecule type" value="Genomic_DNA"/>
</dbReference>
<dbReference type="RefSeq" id="WP_004549982.1">
    <property type="nucleotide sequence ID" value="NC_007434.1"/>
</dbReference>
<dbReference type="SMR" id="Q3JNN5"/>
<dbReference type="EnsemblBacteria" id="ABA48649">
    <property type="protein sequence ID" value="ABA48649"/>
    <property type="gene ID" value="BURPS1710b_3447"/>
</dbReference>
<dbReference type="KEGG" id="bpm:BURPS1710b_3447"/>
<dbReference type="HOGENOM" id="CLU_030231_0_0_4"/>
<dbReference type="UniPathway" id="UPA00098">
    <property type="reaction ID" value="UER00360"/>
</dbReference>
<dbReference type="Proteomes" id="UP000002700">
    <property type="component" value="Chromosome I"/>
</dbReference>
<dbReference type="GO" id="GO:0005737">
    <property type="term" value="C:cytoplasm"/>
    <property type="evidence" value="ECO:0007669"/>
    <property type="project" value="UniProtKB-SubCell"/>
</dbReference>
<dbReference type="GO" id="GO:0004350">
    <property type="term" value="F:glutamate-5-semialdehyde dehydrogenase activity"/>
    <property type="evidence" value="ECO:0007669"/>
    <property type="project" value="UniProtKB-UniRule"/>
</dbReference>
<dbReference type="GO" id="GO:0050661">
    <property type="term" value="F:NADP binding"/>
    <property type="evidence" value="ECO:0007669"/>
    <property type="project" value="InterPro"/>
</dbReference>
<dbReference type="GO" id="GO:0055129">
    <property type="term" value="P:L-proline biosynthetic process"/>
    <property type="evidence" value="ECO:0007669"/>
    <property type="project" value="UniProtKB-UniRule"/>
</dbReference>
<dbReference type="CDD" id="cd07079">
    <property type="entry name" value="ALDH_F18-19_ProA-GPR"/>
    <property type="match status" value="1"/>
</dbReference>
<dbReference type="FunFam" id="3.40.309.10:FF:000006">
    <property type="entry name" value="Gamma-glutamyl phosphate reductase"/>
    <property type="match status" value="1"/>
</dbReference>
<dbReference type="Gene3D" id="3.40.605.10">
    <property type="entry name" value="Aldehyde Dehydrogenase, Chain A, domain 1"/>
    <property type="match status" value="1"/>
</dbReference>
<dbReference type="Gene3D" id="3.40.309.10">
    <property type="entry name" value="Aldehyde Dehydrogenase, Chain A, domain 2"/>
    <property type="match status" value="1"/>
</dbReference>
<dbReference type="HAMAP" id="MF_00412">
    <property type="entry name" value="ProA"/>
    <property type="match status" value="1"/>
</dbReference>
<dbReference type="InterPro" id="IPR016161">
    <property type="entry name" value="Ald_DH/histidinol_DH"/>
</dbReference>
<dbReference type="InterPro" id="IPR016163">
    <property type="entry name" value="Ald_DH_C"/>
</dbReference>
<dbReference type="InterPro" id="IPR016162">
    <property type="entry name" value="Ald_DH_N"/>
</dbReference>
<dbReference type="InterPro" id="IPR015590">
    <property type="entry name" value="Aldehyde_DH_dom"/>
</dbReference>
<dbReference type="InterPro" id="IPR020593">
    <property type="entry name" value="G-glutamylP_reductase_CS"/>
</dbReference>
<dbReference type="InterPro" id="IPR012134">
    <property type="entry name" value="Glu-5-SA_DH"/>
</dbReference>
<dbReference type="InterPro" id="IPR000965">
    <property type="entry name" value="GPR_dom"/>
</dbReference>
<dbReference type="NCBIfam" id="NF001221">
    <property type="entry name" value="PRK00197.1"/>
    <property type="match status" value="1"/>
</dbReference>
<dbReference type="NCBIfam" id="TIGR00407">
    <property type="entry name" value="proA"/>
    <property type="match status" value="1"/>
</dbReference>
<dbReference type="PANTHER" id="PTHR11063:SF8">
    <property type="entry name" value="DELTA-1-PYRROLINE-5-CARBOXYLATE SYNTHASE"/>
    <property type="match status" value="1"/>
</dbReference>
<dbReference type="PANTHER" id="PTHR11063">
    <property type="entry name" value="GLUTAMATE SEMIALDEHYDE DEHYDROGENASE"/>
    <property type="match status" value="1"/>
</dbReference>
<dbReference type="Pfam" id="PF00171">
    <property type="entry name" value="Aldedh"/>
    <property type="match status" value="1"/>
</dbReference>
<dbReference type="PIRSF" id="PIRSF000151">
    <property type="entry name" value="GPR"/>
    <property type="match status" value="1"/>
</dbReference>
<dbReference type="SUPFAM" id="SSF53720">
    <property type="entry name" value="ALDH-like"/>
    <property type="match status" value="1"/>
</dbReference>
<dbReference type="PROSITE" id="PS01223">
    <property type="entry name" value="PROA"/>
    <property type="match status" value="1"/>
</dbReference>
<gene>
    <name evidence="1" type="primary">proA</name>
    <name type="ordered locus">BURPS1710b_3447</name>
</gene>
<proteinExistence type="inferred from homology"/>